<organism>
    <name type="scientific">Xylella fastidiosa (strain Temecula1 / ATCC 700964)</name>
    <dbReference type="NCBI Taxonomy" id="183190"/>
    <lineage>
        <taxon>Bacteria</taxon>
        <taxon>Pseudomonadati</taxon>
        <taxon>Pseudomonadota</taxon>
        <taxon>Gammaproteobacteria</taxon>
        <taxon>Lysobacterales</taxon>
        <taxon>Lysobacteraceae</taxon>
        <taxon>Xylella</taxon>
    </lineage>
</organism>
<reference key="1">
    <citation type="journal article" date="2003" name="J. Bacteriol.">
        <title>Comparative analyses of the complete genome sequences of Pierce's disease and citrus variegated chlorosis strains of Xylella fastidiosa.</title>
        <authorList>
            <person name="Van Sluys M.A."/>
            <person name="de Oliveira M.C."/>
            <person name="Monteiro-Vitorello C.B."/>
            <person name="Miyaki C.Y."/>
            <person name="Furlan L.R."/>
            <person name="Camargo L.E.A."/>
            <person name="da Silva A.C.R."/>
            <person name="Moon D.H."/>
            <person name="Takita M.A."/>
            <person name="Lemos E.G.M."/>
            <person name="Machado M.A."/>
            <person name="Ferro M.I.T."/>
            <person name="da Silva F.R."/>
            <person name="Goldman M.H.S."/>
            <person name="Goldman G.H."/>
            <person name="Lemos M.V.F."/>
            <person name="El-Dorry H."/>
            <person name="Tsai S.M."/>
            <person name="Carrer H."/>
            <person name="Carraro D.M."/>
            <person name="de Oliveira R.C."/>
            <person name="Nunes L.R."/>
            <person name="Siqueira W.J."/>
            <person name="Coutinho L.L."/>
            <person name="Kimura E.T."/>
            <person name="Ferro E.S."/>
            <person name="Harakava R."/>
            <person name="Kuramae E.E."/>
            <person name="Marino C.L."/>
            <person name="Giglioti E."/>
            <person name="Abreu I.L."/>
            <person name="Alves L.M.C."/>
            <person name="do Amaral A.M."/>
            <person name="Baia G.S."/>
            <person name="Blanco S.R."/>
            <person name="Brito M.S."/>
            <person name="Cannavan F.S."/>
            <person name="Celestino A.V."/>
            <person name="da Cunha A.F."/>
            <person name="Fenille R.C."/>
            <person name="Ferro J.A."/>
            <person name="Formighieri E.F."/>
            <person name="Kishi L.T."/>
            <person name="Leoni S.G."/>
            <person name="Oliveira A.R."/>
            <person name="Rosa V.E. Jr."/>
            <person name="Sassaki F.T."/>
            <person name="Sena J.A.D."/>
            <person name="de Souza A.A."/>
            <person name="Truffi D."/>
            <person name="Tsukumo F."/>
            <person name="Yanai G.M."/>
            <person name="Zaros L.G."/>
            <person name="Civerolo E.L."/>
            <person name="Simpson A.J.G."/>
            <person name="Almeida N.F. Jr."/>
            <person name="Setubal J.C."/>
            <person name="Kitajima J.P."/>
        </authorList>
    </citation>
    <scope>NUCLEOTIDE SEQUENCE [LARGE SCALE GENOMIC DNA]</scope>
    <source>
        <strain>Temecula1 / ATCC 700964</strain>
    </source>
</reference>
<dbReference type="EC" id="6.3.5.2" evidence="1"/>
<dbReference type="EMBL" id="AE009442">
    <property type="protein sequence ID" value="AAO29291.1"/>
    <property type="molecule type" value="Genomic_DNA"/>
</dbReference>
<dbReference type="RefSeq" id="WP_004088421.1">
    <property type="nucleotide sequence ID" value="NC_004556.1"/>
</dbReference>
<dbReference type="SMR" id="Q87BK6"/>
<dbReference type="GeneID" id="93905268"/>
<dbReference type="KEGG" id="xft:PD_1447"/>
<dbReference type="HOGENOM" id="CLU_014340_0_5_6"/>
<dbReference type="UniPathway" id="UPA00189">
    <property type="reaction ID" value="UER00296"/>
</dbReference>
<dbReference type="Proteomes" id="UP000002516">
    <property type="component" value="Chromosome"/>
</dbReference>
<dbReference type="GO" id="GO:0005829">
    <property type="term" value="C:cytosol"/>
    <property type="evidence" value="ECO:0007669"/>
    <property type="project" value="TreeGrafter"/>
</dbReference>
<dbReference type="GO" id="GO:0005524">
    <property type="term" value="F:ATP binding"/>
    <property type="evidence" value="ECO:0007669"/>
    <property type="project" value="UniProtKB-UniRule"/>
</dbReference>
<dbReference type="GO" id="GO:0003921">
    <property type="term" value="F:GMP synthase activity"/>
    <property type="evidence" value="ECO:0007669"/>
    <property type="project" value="InterPro"/>
</dbReference>
<dbReference type="CDD" id="cd01742">
    <property type="entry name" value="GATase1_GMP_Synthase"/>
    <property type="match status" value="1"/>
</dbReference>
<dbReference type="CDD" id="cd01997">
    <property type="entry name" value="GMP_synthase_C"/>
    <property type="match status" value="1"/>
</dbReference>
<dbReference type="FunFam" id="3.30.300.10:FF:000002">
    <property type="entry name" value="GMP synthase [glutamine-hydrolyzing]"/>
    <property type="match status" value="1"/>
</dbReference>
<dbReference type="FunFam" id="3.40.50.620:FF:000001">
    <property type="entry name" value="GMP synthase [glutamine-hydrolyzing]"/>
    <property type="match status" value="1"/>
</dbReference>
<dbReference type="FunFam" id="3.40.50.880:FF:000001">
    <property type="entry name" value="GMP synthase [glutamine-hydrolyzing]"/>
    <property type="match status" value="1"/>
</dbReference>
<dbReference type="Gene3D" id="3.30.300.10">
    <property type="match status" value="1"/>
</dbReference>
<dbReference type="Gene3D" id="3.40.50.880">
    <property type="match status" value="1"/>
</dbReference>
<dbReference type="Gene3D" id="3.40.50.620">
    <property type="entry name" value="HUPs"/>
    <property type="match status" value="1"/>
</dbReference>
<dbReference type="HAMAP" id="MF_00344">
    <property type="entry name" value="GMP_synthase"/>
    <property type="match status" value="1"/>
</dbReference>
<dbReference type="InterPro" id="IPR029062">
    <property type="entry name" value="Class_I_gatase-like"/>
</dbReference>
<dbReference type="InterPro" id="IPR017926">
    <property type="entry name" value="GATASE"/>
</dbReference>
<dbReference type="InterPro" id="IPR001674">
    <property type="entry name" value="GMP_synth_C"/>
</dbReference>
<dbReference type="InterPro" id="IPR004739">
    <property type="entry name" value="GMP_synth_GATase"/>
</dbReference>
<dbReference type="InterPro" id="IPR022955">
    <property type="entry name" value="GMP_synthase"/>
</dbReference>
<dbReference type="InterPro" id="IPR025777">
    <property type="entry name" value="GMPS_ATP_PPase_dom"/>
</dbReference>
<dbReference type="InterPro" id="IPR022310">
    <property type="entry name" value="NAD/GMP_synthase"/>
</dbReference>
<dbReference type="InterPro" id="IPR014729">
    <property type="entry name" value="Rossmann-like_a/b/a_fold"/>
</dbReference>
<dbReference type="NCBIfam" id="TIGR00884">
    <property type="entry name" value="guaA_Cterm"/>
    <property type="match status" value="1"/>
</dbReference>
<dbReference type="NCBIfam" id="TIGR00888">
    <property type="entry name" value="guaA_Nterm"/>
    <property type="match status" value="1"/>
</dbReference>
<dbReference type="NCBIfam" id="NF000848">
    <property type="entry name" value="PRK00074.1"/>
    <property type="match status" value="1"/>
</dbReference>
<dbReference type="PANTHER" id="PTHR11922:SF2">
    <property type="entry name" value="GMP SYNTHASE [GLUTAMINE-HYDROLYZING]"/>
    <property type="match status" value="1"/>
</dbReference>
<dbReference type="PANTHER" id="PTHR11922">
    <property type="entry name" value="GMP SYNTHASE-RELATED"/>
    <property type="match status" value="1"/>
</dbReference>
<dbReference type="Pfam" id="PF00117">
    <property type="entry name" value="GATase"/>
    <property type="match status" value="1"/>
</dbReference>
<dbReference type="Pfam" id="PF00958">
    <property type="entry name" value="GMP_synt_C"/>
    <property type="match status" value="1"/>
</dbReference>
<dbReference type="Pfam" id="PF02540">
    <property type="entry name" value="NAD_synthase"/>
    <property type="match status" value="1"/>
</dbReference>
<dbReference type="PRINTS" id="PR00097">
    <property type="entry name" value="ANTSNTHASEII"/>
</dbReference>
<dbReference type="PRINTS" id="PR00099">
    <property type="entry name" value="CPSGATASE"/>
</dbReference>
<dbReference type="PRINTS" id="PR00096">
    <property type="entry name" value="GATASE"/>
</dbReference>
<dbReference type="SUPFAM" id="SSF52402">
    <property type="entry name" value="Adenine nucleotide alpha hydrolases-like"/>
    <property type="match status" value="1"/>
</dbReference>
<dbReference type="SUPFAM" id="SSF52317">
    <property type="entry name" value="Class I glutamine amidotransferase-like"/>
    <property type="match status" value="1"/>
</dbReference>
<dbReference type="SUPFAM" id="SSF54810">
    <property type="entry name" value="GMP synthetase C-terminal dimerisation domain"/>
    <property type="match status" value="1"/>
</dbReference>
<dbReference type="PROSITE" id="PS51273">
    <property type="entry name" value="GATASE_TYPE_1"/>
    <property type="match status" value="1"/>
</dbReference>
<dbReference type="PROSITE" id="PS51553">
    <property type="entry name" value="GMPS_ATP_PPASE"/>
    <property type="match status" value="1"/>
</dbReference>
<sequence>MTPNIHHDKILILDFGAQYTQLIARRIREIGVYCEVWPWDHSPEEILSFGAKGIILSGGPESTTSPGAPAAPQHVFDSDLPIFGICYGMQTMAVHLGGATEAADKREFGHASVQVIYPDTLFSGLSDHPSEFRLDVWMSHGDHVSRVPPCFTITAATDRIPIAAMSREDKRWYGVQFHPEVTHTLQGQALLRRFVVDICGCQTLWTSANIIEDQIARVRERVGCDEVILGLSGGVDSSVVAALLHKAIGSQLTCVFVDTGMLRWGEGDQVMAMFAEHMGVNVVRINAASRYFDALQGVYDPEAKRKIIGNLFIQIFEEEASKRKQAKWLAQGTIYPDVIESAGSKTGKAHVIKSHHNVGGLPEQMTLGMVEPLRELFKDEVRRLGVALGLPHAMVYRHPFPGPGLGVRILGEVKPEYAELLAKADSIFIDELHQADLYDKVSQAFAVFLPVKSVGVVGDARAYEWVIALRAVETVDFMTAHWAPLPYDFLSTVSNRIINELRGVSRVVYDISGKPPATIEWE</sequence>
<proteinExistence type="inferred from homology"/>
<keyword id="KW-0067">ATP-binding</keyword>
<keyword id="KW-0315">Glutamine amidotransferase</keyword>
<keyword id="KW-0332">GMP biosynthesis</keyword>
<keyword id="KW-0436">Ligase</keyword>
<keyword id="KW-0547">Nucleotide-binding</keyword>
<keyword id="KW-0658">Purine biosynthesis</keyword>
<keyword id="KW-1185">Reference proteome</keyword>
<gene>
    <name evidence="1" type="primary">guaA</name>
    <name type="ordered locus">PD_1447</name>
</gene>
<name>GUAA_XYLFT</name>
<accession>Q87BK6</accession>
<protein>
    <recommendedName>
        <fullName evidence="1">GMP synthase [glutamine-hydrolyzing]</fullName>
        <ecNumber evidence="1">6.3.5.2</ecNumber>
    </recommendedName>
    <alternativeName>
        <fullName evidence="1">GMP synthetase</fullName>
    </alternativeName>
    <alternativeName>
        <fullName evidence="1">Glutamine amidotransferase</fullName>
    </alternativeName>
</protein>
<evidence type="ECO:0000255" key="1">
    <source>
        <dbReference type="HAMAP-Rule" id="MF_00344"/>
    </source>
</evidence>
<comment type="function">
    <text evidence="1">Catalyzes the synthesis of GMP from XMP.</text>
</comment>
<comment type="catalytic activity">
    <reaction evidence="1">
        <text>XMP + L-glutamine + ATP + H2O = GMP + L-glutamate + AMP + diphosphate + 2 H(+)</text>
        <dbReference type="Rhea" id="RHEA:11680"/>
        <dbReference type="ChEBI" id="CHEBI:15377"/>
        <dbReference type="ChEBI" id="CHEBI:15378"/>
        <dbReference type="ChEBI" id="CHEBI:29985"/>
        <dbReference type="ChEBI" id="CHEBI:30616"/>
        <dbReference type="ChEBI" id="CHEBI:33019"/>
        <dbReference type="ChEBI" id="CHEBI:57464"/>
        <dbReference type="ChEBI" id="CHEBI:58115"/>
        <dbReference type="ChEBI" id="CHEBI:58359"/>
        <dbReference type="ChEBI" id="CHEBI:456215"/>
        <dbReference type="EC" id="6.3.5.2"/>
    </reaction>
</comment>
<comment type="pathway">
    <text evidence="1">Purine metabolism; GMP biosynthesis; GMP from XMP (L-Gln route): step 1/1.</text>
</comment>
<comment type="subunit">
    <text evidence="1">Homodimer.</text>
</comment>
<feature type="chain" id="PRO_0000140213" description="GMP synthase [glutamine-hydrolyzing]">
    <location>
        <begin position="1"/>
        <end position="522"/>
    </location>
</feature>
<feature type="domain" description="Glutamine amidotransferase type-1" evidence="1">
    <location>
        <begin position="9"/>
        <end position="204"/>
    </location>
</feature>
<feature type="domain" description="GMPS ATP-PPase" evidence="1">
    <location>
        <begin position="205"/>
        <end position="397"/>
    </location>
</feature>
<feature type="active site" description="Nucleophile" evidence="1">
    <location>
        <position position="86"/>
    </location>
</feature>
<feature type="active site" evidence="1">
    <location>
        <position position="178"/>
    </location>
</feature>
<feature type="active site" evidence="1">
    <location>
        <position position="180"/>
    </location>
</feature>
<feature type="binding site" evidence="1">
    <location>
        <begin position="232"/>
        <end position="238"/>
    </location>
    <ligand>
        <name>ATP</name>
        <dbReference type="ChEBI" id="CHEBI:30616"/>
    </ligand>
</feature>